<reference key="1">
    <citation type="journal article" date="1996" name="J. Virol.">
        <title>Determination and analysis of the complete nucleotide sequence of human herpesvirus.</title>
        <authorList>
            <person name="Nicholas J."/>
        </authorList>
    </citation>
    <scope>NUCLEOTIDE SEQUENCE [LARGE SCALE GENOMIC DNA]</scope>
</reference>
<sequence length="379" mass="43877">MQSLPSRRSETNKKIISEKISETITLNKLPMSRYLHFFLFTVTDVDDIWNFSETKESSLTWPKIDAKQLNEYVNTELTVYQRPFSLLGIPQNGLFKSCEKIYDEFFAEHMDNEKKYLTFPRNRSSRFGFENVPRVNELPILINHFEKSRMDVILNTNKIVLVNRELIWVPCEQVRIFNLNVSLNIPDGLFGILTGTVNDTLCECVTELITTENVISISLINLSSESVMLLPGDIELVINILPCYIPEPWETYNFPSPNFIKFSLITNKDFYVESNNYTIQNFDYMFDCPDELKALIIANKEILCHGLVVETNIWLKNTTPSVKIFNPTSQRIFVQAGICIATIIFTCGHFILKLLPNRVLNQLAVLDKTSMLWFQYSTE</sequence>
<organism>
    <name type="scientific">Human herpesvirus 7 (strain JI)</name>
    <name type="common">HHV-7</name>
    <name type="synonym">Human T lymphotropic virus</name>
    <dbReference type="NCBI Taxonomy" id="57278"/>
    <lineage>
        <taxon>Viruses</taxon>
        <taxon>Duplodnaviria</taxon>
        <taxon>Heunggongvirae</taxon>
        <taxon>Peploviricota</taxon>
        <taxon>Herviviricetes</taxon>
        <taxon>Herpesvirales</taxon>
        <taxon>Orthoherpesviridae</taxon>
        <taxon>Betaherpesvirinae</taxon>
        <taxon>Roseolovirus</taxon>
        <taxon>Roseolovirus humanbeta7</taxon>
        <taxon>Human betaherpesvirus 7</taxon>
    </lineage>
</organism>
<evidence type="ECO:0000255" key="1">
    <source>
        <dbReference type="HAMAP-Rule" id="MF_04031"/>
    </source>
</evidence>
<keyword id="KW-0378">Hydrolase</keyword>
<keyword id="KW-0460">Magnesium</keyword>
<keyword id="KW-0479">Metal-binding</keyword>
<keyword id="KW-0546">Nucleotide metabolism</keyword>
<keyword id="KW-1185">Reference proteome</keyword>
<gene>
    <name evidence="1" type="primary">DUT</name>
    <name type="ordered locus">U45</name>
</gene>
<accession>P52341</accession>
<name>DUT_HHV7J</name>
<feature type="chain" id="PRO_0000182961" description="Deoxyuridine 5'-triphosphate nucleotidohydrolase">
    <location>
        <begin position="1"/>
        <end position="379"/>
    </location>
</feature>
<proteinExistence type="inferred from homology"/>
<protein>
    <recommendedName>
        <fullName evidence="1">Deoxyuridine 5'-triphosphate nucleotidohydrolase</fullName>
        <shortName evidence="1">dUTPase</shortName>
        <ecNumber evidence="1">3.6.1.23</ecNumber>
    </recommendedName>
    <alternativeName>
        <fullName evidence="1">dUTP pyrophosphatase</fullName>
    </alternativeName>
</protein>
<comment type="function">
    <text evidence="1">Involved in nucleotide metabolism: produces dUMP, the immediate precursor of thymidine nucleotides and decreases the intracellular concentration of dUTP to avoid uracil incorporation into viral DNA.</text>
</comment>
<comment type="catalytic activity">
    <reaction evidence="1">
        <text>dUTP + H2O = dUMP + diphosphate + H(+)</text>
        <dbReference type="Rhea" id="RHEA:10248"/>
        <dbReference type="ChEBI" id="CHEBI:15377"/>
        <dbReference type="ChEBI" id="CHEBI:15378"/>
        <dbReference type="ChEBI" id="CHEBI:33019"/>
        <dbReference type="ChEBI" id="CHEBI:61555"/>
        <dbReference type="ChEBI" id="CHEBI:246422"/>
        <dbReference type="EC" id="3.6.1.23"/>
    </reaction>
</comment>
<comment type="cofactor">
    <cofactor evidence="1">
        <name>Mg(2+)</name>
        <dbReference type="ChEBI" id="CHEBI:18420"/>
    </cofactor>
</comment>
<comment type="similarity">
    <text evidence="1">Belongs to the dUTPase family.</text>
</comment>
<organismHost>
    <name type="scientific">Homo sapiens</name>
    <name type="common">Human</name>
    <dbReference type="NCBI Taxonomy" id="9606"/>
</organismHost>
<dbReference type="EC" id="3.6.1.23" evidence="1"/>
<dbReference type="EMBL" id="U43400">
    <property type="protein sequence ID" value="AAC54707.1"/>
    <property type="molecule type" value="Genomic_DNA"/>
</dbReference>
<dbReference type="PIR" id="T41947">
    <property type="entry name" value="T41947"/>
</dbReference>
<dbReference type="RefSeq" id="YP_073785.1">
    <property type="nucleotide sequence ID" value="NC_001716.2"/>
</dbReference>
<dbReference type="SMR" id="P52341"/>
<dbReference type="DNASU" id="3289503"/>
<dbReference type="GeneID" id="3289503"/>
<dbReference type="KEGG" id="vg:3289503"/>
<dbReference type="Proteomes" id="UP000009246">
    <property type="component" value="Segment"/>
</dbReference>
<dbReference type="GO" id="GO:0004170">
    <property type="term" value="F:dUTP diphosphatase activity"/>
    <property type="evidence" value="ECO:0007669"/>
    <property type="project" value="UniProtKB-EC"/>
</dbReference>
<dbReference type="GO" id="GO:0046872">
    <property type="term" value="F:metal ion binding"/>
    <property type="evidence" value="ECO:0007669"/>
    <property type="project" value="UniProtKB-KW"/>
</dbReference>
<dbReference type="GO" id="GO:0046080">
    <property type="term" value="P:dUTP metabolic process"/>
    <property type="evidence" value="ECO:0007669"/>
    <property type="project" value="InterPro"/>
</dbReference>
<dbReference type="HAMAP" id="MF_04031">
    <property type="entry name" value="HSV_DUT"/>
    <property type="match status" value="1"/>
</dbReference>
<dbReference type="InterPro" id="IPR029054">
    <property type="entry name" value="dUTPase-like"/>
</dbReference>
<dbReference type="InterPro" id="IPR036157">
    <property type="entry name" value="dUTPase-like_sf"/>
</dbReference>
<dbReference type="InterPro" id="IPR034745">
    <property type="entry name" value="HSV_DUT"/>
</dbReference>
<dbReference type="Pfam" id="PF00692">
    <property type="entry name" value="dUTPase"/>
    <property type="match status" value="1"/>
</dbReference>
<dbReference type="SUPFAM" id="SSF51283">
    <property type="entry name" value="dUTPase-like"/>
    <property type="match status" value="2"/>
</dbReference>